<name>ANMK_PSEPK</name>
<keyword id="KW-0046">Antibiotic resistance</keyword>
<keyword id="KW-0067">ATP-binding</keyword>
<keyword id="KW-0119">Carbohydrate metabolism</keyword>
<keyword id="KW-0418">Kinase</keyword>
<keyword id="KW-0547">Nucleotide-binding</keyword>
<keyword id="KW-1185">Reference proteome</keyword>
<keyword id="KW-0808">Transferase</keyword>
<dbReference type="EC" id="2.7.1.170" evidence="1"/>
<dbReference type="EMBL" id="AE015451">
    <property type="protein sequence ID" value="AAN66064.1"/>
    <property type="molecule type" value="Genomic_DNA"/>
</dbReference>
<dbReference type="RefSeq" id="NP_742600.1">
    <property type="nucleotide sequence ID" value="NC_002947.4"/>
</dbReference>
<dbReference type="RefSeq" id="WP_010951767.1">
    <property type="nucleotide sequence ID" value="NZ_CP169744.1"/>
</dbReference>
<dbReference type="SMR" id="Q88QQ4"/>
<dbReference type="STRING" id="160488.PP_0434"/>
<dbReference type="PaxDb" id="160488-PP_0434"/>
<dbReference type="KEGG" id="ppu:PP_0434"/>
<dbReference type="PATRIC" id="fig|160488.4.peg.465"/>
<dbReference type="eggNOG" id="COG2377">
    <property type="taxonomic scope" value="Bacteria"/>
</dbReference>
<dbReference type="HOGENOM" id="CLU_038782_0_0_6"/>
<dbReference type="OrthoDB" id="9763949at2"/>
<dbReference type="PhylomeDB" id="Q88QQ4"/>
<dbReference type="BioCyc" id="PPUT160488:G1G01-470-MONOMER"/>
<dbReference type="UniPathway" id="UPA00343"/>
<dbReference type="UniPathway" id="UPA00544"/>
<dbReference type="Proteomes" id="UP000000556">
    <property type="component" value="Chromosome"/>
</dbReference>
<dbReference type="GO" id="GO:0005524">
    <property type="term" value="F:ATP binding"/>
    <property type="evidence" value="ECO:0007669"/>
    <property type="project" value="UniProtKB-UniRule"/>
</dbReference>
<dbReference type="GO" id="GO:0016301">
    <property type="term" value="F:kinase activity"/>
    <property type="evidence" value="ECO:0007669"/>
    <property type="project" value="UniProtKB-KW"/>
</dbReference>
<dbReference type="GO" id="GO:0016773">
    <property type="term" value="F:phosphotransferase activity, alcohol group as acceptor"/>
    <property type="evidence" value="ECO:0007669"/>
    <property type="project" value="UniProtKB-UniRule"/>
</dbReference>
<dbReference type="GO" id="GO:0097175">
    <property type="term" value="P:1,6-anhydro-N-acetyl-beta-muramic acid catabolic process"/>
    <property type="evidence" value="ECO:0007669"/>
    <property type="project" value="UniProtKB-UniRule"/>
</dbReference>
<dbReference type="GO" id="GO:0006040">
    <property type="term" value="P:amino sugar metabolic process"/>
    <property type="evidence" value="ECO:0007669"/>
    <property type="project" value="InterPro"/>
</dbReference>
<dbReference type="GO" id="GO:0009254">
    <property type="term" value="P:peptidoglycan turnover"/>
    <property type="evidence" value="ECO:0007669"/>
    <property type="project" value="UniProtKB-UniRule"/>
</dbReference>
<dbReference type="GO" id="GO:0046677">
    <property type="term" value="P:response to antibiotic"/>
    <property type="evidence" value="ECO:0007669"/>
    <property type="project" value="UniProtKB-KW"/>
</dbReference>
<dbReference type="CDD" id="cd24050">
    <property type="entry name" value="ASKHA_NBD_ANMK"/>
    <property type="match status" value="1"/>
</dbReference>
<dbReference type="Gene3D" id="3.30.420.40">
    <property type="match status" value="2"/>
</dbReference>
<dbReference type="HAMAP" id="MF_01270">
    <property type="entry name" value="AnhMurNAc_kinase"/>
    <property type="match status" value="1"/>
</dbReference>
<dbReference type="InterPro" id="IPR005338">
    <property type="entry name" value="Anhydro_N_Ac-Mur_kinase"/>
</dbReference>
<dbReference type="InterPro" id="IPR043129">
    <property type="entry name" value="ATPase_NBD"/>
</dbReference>
<dbReference type="NCBIfam" id="NF007139">
    <property type="entry name" value="PRK09585.1-3"/>
    <property type="match status" value="1"/>
</dbReference>
<dbReference type="PANTHER" id="PTHR30605">
    <property type="entry name" value="ANHYDRO-N-ACETYLMURAMIC ACID KINASE"/>
    <property type="match status" value="1"/>
</dbReference>
<dbReference type="PANTHER" id="PTHR30605:SF0">
    <property type="entry name" value="ANHYDRO-N-ACETYLMURAMIC ACID KINASE"/>
    <property type="match status" value="1"/>
</dbReference>
<dbReference type="Pfam" id="PF03702">
    <property type="entry name" value="AnmK"/>
    <property type="match status" value="1"/>
</dbReference>
<dbReference type="SUPFAM" id="SSF53067">
    <property type="entry name" value="Actin-like ATPase domain"/>
    <property type="match status" value="1"/>
</dbReference>
<protein>
    <recommendedName>
        <fullName evidence="1">Anhydro-N-acetylmuramic acid kinase</fullName>
        <ecNumber evidence="1">2.7.1.170</ecNumber>
    </recommendedName>
    <alternativeName>
        <fullName evidence="1 3">AnhMurNAc kinase</fullName>
    </alternativeName>
</protein>
<organism>
    <name type="scientific">Pseudomonas putida (strain ATCC 47054 / DSM 6125 / CFBP 8728 / NCIMB 11950 / KT2440)</name>
    <dbReference type="NCBI Taxonomy" id="160488"/>
    <lineage>
        <taxon>Bacteria</taxon>
        <taxon>Pseudomonadati</taxon>
        <taxon>Pseudomonadota</taxon>
        <taxon>Gammaproteobacteria</taxon>
        <taxon>Pseudomonadales</taxon>
        <taxon>Pseudomonadaceae</taxon>
        <taxon>Pseudomonas</taxon>
    </lineage>
</organism>
<feature type="chain" id="PRO_0000250031" description="Anhydro-N-acetylmuramic acid kinase">
    <location>
        <begin position="1"/>
        <end position="363"/>
    </location>
</feature>
<feature type="binding site" evidence="1">
    <location>
        <begin position="10"/>
        <end position="17"/>
    </location>
    <ligand>
        <name>ATP</name>
        <dbReference type="ChEBI" id="CHEBI:30616"/>
    </ligand>
</feature>
<proteinExistence type="inferred from homology"/>
<evidence type="ECO:0000255" key="1">
    <source>
        <dbReference type="HAMAP-Rule" id="MF_01270"/>
    </source>
</evidence>
<evidence type="ECO:0000269" key="2">
    <source>
    </source>
</evidence>
<evidence type="ECO:0000303" key="3">
    <source>
    </source>
</evidence>
<sequence length="363" mass="38236">MALYLGVMSGTSLDGLDIALVEQGEQLELLATHYLPMPPDLRQDLLALCSSGPDEIARAALAENRWASLAGEGIRQLLARQGLKPEAVRAIGSHGQTIRHEPARGFTVQIGNPALLAELTGISVVADFRRRDVAAGGQGAPLVPAFHETLFSQLGRRLAILNVGGFSNLSLIEQDKPVHGFDCGPGNVLLDAWIEREHGHPYDADGAWAASGVAQPGLLSALMADPFFAGSGPKSTGREVFNLPWLDRHLANLPAYRAQDVQATLLELTARSIIDSLGKAQQGTEALLVCGGGARNGALMARLGQLLPAARVASTGAYGVDPDWVEAMAFAWLAHCCLEGIAANRPSVTAAKGLRVLGAIYPA</sequence>
<accession>Q88QQ4</accession>
<gene>
    <name evidence="1 3" type="primary">anmK</name>
    <name type="ordered locus">PP_0434</name>
</gene>
<comment type="function">
    <text evidence="1 2">Catalyzes the specific phosphorylation of 1,6-anhydro-N-acetylmuramic acid (anhMurNAc) with the simultaneous cleavage of the 1,6-anhydro ring, generating MurNAc-6-P (By similarity). Is required for the utilization of anhMurNAc either imported from the medium or derived from its own cell wall murein, and thus plays a role in cell wall recycling. Contributes to intrinsic fosfomycin resistance in P.putida (PubMed:23831760).</text>
</comment>
<comment type="catalytic activity">
    <reaction evidence="1">
        <text>1,6-anhydro-N-acetyl-beta-muramate + ATP + H2O = N-acetyl-D-muramate 6-phosphate + ADP + H(+)</text>
        <dbReference type="Rhea" id="RHEA:24952"/>
        <dbReference type="ChEBI" id="CHEBI:15377"/>
        <dbReference type="ChEBI" id="CHEBI:15378"/>
        <dbReference type="ChEBI" id="CHEBI:30616"/>
        <dbReference type="ChEBI" id="CHEBI:58690"/>
        <dbReference type="ChEBI" id="CHEBI:58722"/>
        <dbReference type="ChEBI" id="CHEBI:456216"/>
        <dbReference type="EC" id="2.7.1.170"/>
    </reaction>
</comment>
<comment type="pathway">
    <text evidence="1 2">Amino-sugar metabolism; 1,6-anhydro-N-acetylmuramate degradation.</text>
</comment>
<comment type="pathway">
    <text evidence="1 2">Cell wall biogenesis; peptidoglycan recycling.</text>
</comment>
<comment type="disruption phenotype">
    <text evidence="2">Cells lacking this gene accumulate anhMurNAc and are fosfomycin sensitive, in contrast to wild-type P.putida, which is resistant to fosfomycin.</text>
</comment>
<comment type="similarity">
    <text evidence="1">Belongs to the anhydro-N-acetylmuramic acid kinase family.</text>
</comment>
<reference key="1">
    <citation type="journal article" date="2002" name="Environ. Microbiol.">
        <title>Complete genome sequence and comparative analysis of the metabolically versatile Pseudomonas putida KT2440.</title>
        <authorList>
            <person name="Nelson K.E."/>
            <person name="Weinel C."/>
            <person name="Paulsen I.T."/>
            <person name="Dodson R.J."/>
            <person name="Hilbert H."/>
            <person name="Martins dos Santos V.A.P."/>
            <person name="Fouts D.E."/>
            <person name="Gill S.R."/>
            <person name="Pop M."/>
            <person name="Holmes M."/>
            <person name="Brinkac L.M."/>
            <person name="Beanan M.J."/>
            <person name="DeBoy R.T."/>
            <person name="Daugherty S.C."/>
            <person name="Kolonay J.F."/>
            <person name="Madupu R."/>
            <person name="Nelson W.C."/>
            <person name="White O."/>
            <person name="Peterson J.D."/>
            <person name="Khouri H.M."/>
            <person name="Hance I."/>
            <person name="Chris Lee P."/>
            <person name="Holtzapple E.K."/>
            <person name="Scanlan D."/>
            <person name="Tran K."/>
            <person name="Moazzez A."/>
            <person name="Utterback T.R."/>
            <person name="Rizzo M."/>
            <person name="Lee K."/>
            <person name="Kosack D."/>
            <person name="Moestl D."/>
            <person name="Wedler H."/>
            <person name="Lauber J."/>
            <person name="Stjepandic D."/>
            <person name="Hoheisel J."/>
            <person name="Straetz M."/>
            <person name="Heim S."/>
            <person name="Kiewitz C."/>
            <person name="Eisen J.A."/>
            <person name="Timmis K.N."/>
            <person name="Duesterhoeft A."/>
            <person name="Tuemmler B."/>
            <person name="Fraser C.M."/>
        </authorList>
    </citation>
    <scope>NUCLEOTIDE SEQUENCE [LARGE SCALE GENOMIC DNA]</scope>
    <source>
        <strain>ATCC 47054 / DSM 6125 / CFBP 8728 / NCIMB 11950 / KT2440</strain>
    </source>
</reference>
<reference key="2">
    <citation type="journal article" date="2013" name="Nat. Chem. Biol.">
        <title>A cell wall recycling shortcut that bypasses peptidoglycan de novo biosynthesis.</title>
        <authorList>
            <person name="Gisin J."/>
            <person name="Schneider A."/>
            <person name="Naegele B."/>
            <person name="Borisova M."/>
            <person name="Mayer C."/>
        </authorList>
    </citation>
    <scope>FUNCTION</scope>
    <scope>DISRUPTION PHENOTYPE</scope>
    <scope>PATHWAY</scope>
</reference>